<name>RS19_LISMH</name>
<protein>
    <recommendedName>
        <fullName evidence="1">Small ribosomal subunit protein uS19</fullName>
    </recommendedName>
    <alternativeName>
        <fullName evidence="2">30S ribosomal protein S19</fullName>
    </alternativeName>
</protein>
<dbReference type="EMBL" id="CP001175">
    <property type="protein sequence ID" value="ACK41237.1"/>
    <property type="molecule type" value="Genomic_DNA"/>
</dbReference>
<dbReference type="RefSeq" id="WP_003720946.1">
    <property type="nucleotide sequence ID" value="NC_011660.1"/>
</dbReference>
<dbReference type="SMR" id="B8DB12"/>
<dbReference type="GeneID" id="93236050"/>
<dbReference type="KEGG" id="lmh:LMHCC_2906"/>
<dbReference type="HOGENOM" id="CLU_144911_0_1_9"/>
<dbReference type="GO" id="GO:0005737">
    <property type="term" value="C:cytoplasm"/>
    <property type="evidence" value="ECO:0007669"/>
    <property type="project" value="UniProtKB-ARBA"/>
</dbReference>
<dbReference type="GO" id="GO:0015935">
    <property type="term" value="C:small ribosomal subunit"/>
    <property type="evidence" value="ECO:0007669"/>
    <property type="project" value="InterPro"/>
</dbReference>
<dbReference type="GO" id="GO:0019843">
    <property type="term" value="F:rRNA binding"/>
    <property type="evidence" value="ECO:0007669"/>
    <property type="project" value="UniProtKB-UniRule"/>
</dbReference>
<dbReference type="GO" id="GO:0003735">
    <property type="term" value="F:structural constituent of ribosome"/>
    <property type="evidence" value="ECO:0007669"/>
    <property type="project" value="InterPro"/>
</dbReference>
<dbReference type="GO" id="GO:0000028">
    <property type="term" value="P:ribosomal small subunit assembly"/>
    <property type="evidence" value="ECO:0007669"/>
    <property type="project" value="TreeGrafter"/>
</dbReference>
<dbReference type="GO" id="GO:0006412">
    <property type="term" value="P:translation"/>
    <property type="evidence" value="ECO:0007669"/>
    <property type="project" value="UniProtKB-UniRule"/>
</dbReference>
<dbReference type="FunFam" id="3.30.860.10:FF:000001">
    <property type="entry name" value="30S ribosomal protein S19"/>
    <property type="match status" value="1"/>
</dbReference>
<dbReference type="Gene3D" id="3.30.860.10">
    <property type="entry name" value="30s Ribosomal Protein S19, Chain A"/>
    <property type="match status" value="1"/>
</dbReference>
<dbReference type="HAMAP" id="MF_00531">
    <property type="entry name" value="Ribosomal_uS19"/>
    <property type="match status" value="1"/>
</dbReference>
<dbReference type="InterPro" id="IPR002222">
    <property type="entry name" value="Ribosomal_uS19"/>
</dbReference>
<dbReference type="InterPro" id="IPR005732">
    <property type="entry name" value="Ribosomal_uS19_bac-type"/>
</dbReference>
<dbReference type="InterPro" id="IPR020934">
    <property type="entry name" value="Ribosomal_uS19_CS"/>
</dbReference>
<dbReference type="InterPro" id="IPR023575">
    <property type="entry name" value="Ribosomal_uS19_SF"/>
</dbReference>
<dbReference type="NCBIfam" id="TIGR01050">
    <property type="entry name" value="rpsS_bact"/>
    <property type="match status" value="1"/>
</dbReference>
<dbReference type="PANTHER" id="PTHR11880">
    <property type="entry name" value="RIBOSOMAL PROTEIN S19P FAMILY MEMBER"/>
    <property type="match status" value="1"/>
</dbReference>
<dbReference type="PANTHER" id="PTHR11880:SF8">
    <property type="entry name" value="SMALL RIBOSOMAL SUBUNIT PROTEIN US19M"/>
    <property type="match status" value="1"/>
</dbReference>
<dbReference type="Pfam" id="PF00203">
    <property type="entry name" value="Ribosomal_S19"/>
    <property type="match status" value="1"/>
</dbReference>
<dbReference type="PIRSF" id="PIRSF002144">
    <property type="entry name" value="Ribosomal_S19"/>
    <property type="match status" value="1"/>
</dbReference>
<dbReference type="PRINTS" id="PR00975">
    <property type="entry name" value="RIBOSOMALS19"/>
</dbReference>
<dbReference type="SUPFAM" id="SSF54570">
    <property type="entry name" value="Ribosomal protein S19"/>
    <property type="match status" value="1"/>
</dbReference>
<dbReference type="PROSITE" id="PS00323">
    <property type="entry name" value="RIBOSOMAL_S19"/>
    <property type="match status" value="1"/>
</dbReference>
<accession>B8DB12</accession>
<comment type="function">
    <text evidence="1">Protein S19 forms a complex with S13 that binds strongly to the 16S ribosomal RNA.</text>
</comment>
<comment type="similarity">
    <text evidence="1">Belongs to the universal ribosomal protein uS19 family.</text>
</comment>
<organism>
    <name type="scientific">Listeria monocytogenes serotype 4a (strain HCC23)</name>
    <dbReference type="NCBI Taxonomy" id="552536"/>
    <lineage>
        <taxon>Bacteria</taxon>
        <taxon>Bacillati</taxon>
        <taxon>Bacillota</taxon>
        <taxon>Bacilli</taxon>
        <taxon>Bacillales</taxon>
        <taxon>Listeriaceae</taxon>
        <taxon>Listeria</taxon>
    </lineage>
</organism>
<keyword id="KW-0687">Ribonucleoprotein</keyword>
<keyword id="KW-0689">Ribosomal protein</keyword>
<keyword id="KW-0694">RNA-binding</keyword>
<keyword id="KW-0699">rRNA-binding</keyword>
<feature type="chain" id="PRO_1000146397" description="Small ribosomal subunit protein uS19">
    <location>
        <begin position="1"/>
        <end position="92"/>
    </location>
</feature>
<sequence length="92" mass="10475">MGRSLKKGPFVDDHLMKKVEAAAESEKKQVIKTWSRRSTIFPTFVGQTIAVYDGRKHVPVYVQEDMVGHKLGEFAPTRTYRGHAGDDKKTKR</sequence>
<gene>
    <name evidence="1" type="primary">rpsS</name>
    <name type="ordered locus">LMHCC_2906</name>
</gene>
<reference key="1">
    <citation type="journal article" date="2011" name="J. Bacteriol.">
        <title>Genome sequence of lineage III Listeria monocytogenes strain HCC23.</title>
        <authorList>
            <person name="Steele C.L."/>
            <person name="Donaldson J.R."/>
            <person name="Paul D."/>
            <person name="Banes M.M."/>
            <person name="Arick T."/>
            <person name="Bridges S.M."/>
            <person name="Lawrence M.L."/>
        </authorList>
    </citation>
    <scope>NUCLEOTIDE SEQUENCE [LARGE SCALE GENOMIC DNA]</scope>
    <source>
        <strain>HCC23</strain>
    </source>
</reference>
<proteinExistence type="inferred from homology"/>
<evidence type="ECO:0000255" key="1">
    <source>
        <dbReference type="HAMAP-Rule" id="MF_00531"/>
    </source>
</evidence>
<evidence type="ECO:0000305" key="2"/>